<protein>
    <recommendedName>
        <fullName evidence="1">Large ribosomal subunit protein uL6</fullName>
    </recommendedName>
    <alternativeName>
        <fullName evidence="2">50S ribosomal protein L6</fullName>
    </alternativeName>
</protein>
<dbReference type="EMBL" id="BA000011">
    <property type="protein sequence ID" value="BAB59487.1"/>
    <property type="molecule type" value="Genomic_DNA"/>
</dbReference>
<dbReference type="RefSeq" id="WP_010916599.1">
    <property type="nucleotide sequence ID" value="NC_002689.2"/>
</dbReference>
<dbReference type="SMR" id="Q97BW0"/>
<dbReference type="STRING" id="273116.gene:9381122"/>
<dbReference type="PaxDb" id="273116-14324560"/>
<dbReference type="GeneID" id="1440857"/>
<dbReference type="KEGG" id="tvo:TVG0340711"/>
<dbReference type="eggNOG" id="arCOG04090">
    <property type="taxonomic scope" value="Archaea"/>
</dbReference>
<dbReference type="HOGENOM" id="CLU_065464_0_0_2"/>
<dbReference type="OrthoDB" id="7144at2157"/>
<dbReference type="PhylomeDB" id="Q97BW0"/>
<dbReference type="Proteomes" id="UP000001017">
    <property type="component" value="Chromosome"/>
</dbReference>
<dbReference type="GO" id="GO:0022625">
    <property type="term" value="C:cytosolic large ribosomal subunit"/>
    <property type="evidence" value="ECO:0007669"/>
    <property type="project" value="TreeGrafter"/>
</dbReference>
<dbReference type="GO" id="GO:0019843">
    <property type="term" value="F:rRNA binding"/>
    <property type="evidence" value="ECO:0007669"/>
    <property type="project" value="UniProtKB-UniRule"/>
</dbReference>
<dbReference type="GO" id="GO:0003735">
    <property type="term" value="F:structural constituent of ribosome"/>
    <property type="evidence" value="ECO:0007669"/>
    <property type="project" value="InterPro"/>
</dbReference>
<dbReference type="GO" id="GO:0002181">
    <property type="term" value="P:cytoplasmic translation"/>
    <property type="evidence" value="ECO:0007669"/>
    <property type="project" value="TreeGrafter"/>
</dbReference>
<dbReference type="FunFam" id="3.90.930.12:FF:000008">
    <property type="entry name" value="50S ribosomal protein L6"/>
    <property type="match status" value="1"/>
</dbReference>
<dbReference type="Gene3D" id="3.90.930.12">
    <property type="entry name" value="Ribosomal protein L6, alpha-beta domain"/>
    <property type="match status" value="2"/>
</dbReference>
<dbReference type="HAMAP" id="MF_01365_A">
    <property type="entry name" value="Ribosomal_uL6_A"/>
    <property type="match status" value="1"/>
</dbReference>
<dbReference type="InterPro" id="IPR000702">
    <property type="entry name" value="Ribosomal_uL6-like"/>
</dbReference>
<dbReference type="InterPro" id="IPR036789">
    <property type="entry name" value="Ribosomal_uL6-like_a/b-dom_sf"/>
</dbReference>
<dbReference type="InterPro" id="IPR020040">
    <property type="entry name" value="Ribosomal_uL6_a/b-dom"/>
</dbReference>
<dbReference type="InterPro" id="IPR019907">
    <property type="entry name" value="Ribosomal_uL6_arc"/>
</dbReference>
<dbReference type="NCBIfam" id="NF004037">
    <property type="entry name" value="PRK05518.1"/>
    <property type="match status" value="1"/>
</dbReference>
<dbReference type="NCBIfam" id="TIGR03653">
    <property type="entry name" value="uL6_arch"/>
    <property type="match status" value="1"/>
</dbReference>
<dbReference type="PANTHER" id="PTHR11655:SF16">
    <property type="entry name" value="60S RIBOSOMAL PROTEIN L9"/>
    <property type="match status" value="1"/>
</dbReference>
<dbReference type="PANTHER" id="PTHR11655">
    <property type="entry name" value="60S/50S RIBOSOMAL PROTEIN L6/L9"/>
    <property type="match status" value="1"/>
</dbReference>
<dbReference type="Pfam" id="PF00347">
    <property type="entry name" value="Ribosomal_L6"/>
    <property type="match status" value="1"/>
</dbReference>
<dbReference type="PIRSF" id="PIRSF002162">
    <property type="entry name" value="Ribosomal_L6"/>
    <property type="match status" value="1"/>
</dbReference>
<dbReference type="SUPFAM" id="SSF56053">
    <property type="entry name" value="Ribosomal protein L6"/>
    <property type="match status" value="2"/>
</dbReference>
<accession>Q97BW0</accession>
<name>RL6_THEVO</name>
<evidence type="ECO:0000255" key="1">
    <source>
        <dbReference type="HAMAP-Rule" id="MF_01365"/>
    </source>
</evidence>
<evidence type="ECO:0000305" key="2"/>
<sequence length="178" mass="20025">MIKWEEASVIEIPKDVKVGLSGTMLSMTFGNKKLEKKFADNYVRLLVEDNKIKIVKSKNNSRERGIVGTWASEISNMVKGLKEGFQYEMKIDYSHFPMRVSVKGKTVVIENFFGERSPRTAEIVGETQVSVKGDRLFLNGPSKKDVGETAANIERATIIKGFDPRVFQDGIYLISKGE</sequence>
<comment type="function">
    <text evidence="1">This protein binds to the 23S rRNA, and is important in its secondary structure. It is located near the subunit interface in the base of the L7/L12 stalk, and near the tRNA binding site of the peptidyltransferase center.</text>
</comment>
<comment type="subunit">
    <text evidence="1">Part of the 50S ribosomal subunit.</text>
</comment>
<comment type="similarity">
    <text evidence="1">Belongs to the universal ribosomal protein uL6 family.</text>
</comment>
<proteinExistence type="inferred from homology"/>
<organism>
    <name type="scientific">Thermoplasma volcanium (strain ATCC 51530 / DSM 4299 / JCM 9571 / NBRC 15438 / GSS1)</name>
    <dbReference type="NCBI Taxonomy" id="273116"/>
    <lineage>
        <taxon>Archaea</taxon>
        <taxon>Methanobacteriati</taxon>
        <taxon>Thermoplasmatota</taxon>
        <taxon>Thermoplasmata</taxon>
        <taxon>Thermoplasmatales</taxon>
        <taxon>Thermoplasmataceae</taxon>
        <taxon>Thermoplasma</taxon>
    </lineage>
</organism>
<feature type="chain" id="PRO_0000261000" description="Large ribosomal subunit protein uL6">
    <location>
        <begin position="1"/>
        <end position="178"/>
    </location>
</feature>
<keyword id="KW-0687">Ribonucleoprotein</keyword>
<keyword id="KW-0689">Ribosomal protein</keyword>
<keyword id="KW-0694">RNA-binding</keyword>
<keyword id="KW-0699">rRNA-binding</keyword>
<gene>
    <name evidence="1" type="primary">rpl6</name>
    <name type="ordered locus">TV0345</name>
    <name type="ORF">TVG0340711</name>
</gene>
<reference key="1">
    <citation type="journal article" date="2000" name="Proc. Natl. Acad. Sci. U.S.A.">
        <title>Archaeal adaptation to higher temperatures revealed by genomic sequence of Thermoplasma volcanium.</title>
        <authorList>
            <person name="Kawashima T."/>
            <person name="Amano N."/>
            <person name="Koike H."/>
            <person name="Makino S."/>
            <person name="Higuchi S."/>
            <person name="Kawashima-Ohya Y."/>
            <person name="Watanabe K."/>
            <person name="Yamazaki M."/>
            <person name="Kanehori K."/>
            <person name="Kawamoto T."/>
            <person name="Nunoshiba T."/>
            <person name="Yamamoto Y."/>
            <person name="Aramaki H."/>
            <person name="Makino K."/>
            <person name="Suzuki M."/>
        </authorList>
    </citation>
    <scope>NUCLEOTIDE SEQUENCE [LARGE SCALE GENOMIC DNA]</scope>
    <source>
        <strain>ATCC 51530 / DSM 4299 / JCM 9571 / NBRC 15438 / GSS1</strain>
    </source>
</reference>